<comment type="function">
    <text evidence="2 3">Part of a putrescine export transport system, does not play a role in resistance to antimicrobial peptides (PubMed:27803167). Does not stimulate K(+) uptake ability of TrkH on its own, but increases K(+) uptake by 20% in the presence of SapD; has no effect of TrkG (PubMed:11700350).</text>
</comment>
<comment type="interaction">
    <interactant intactId="EBI-558765">
        <id>P0AAH8</id>
    </interactant>
    <interactant intactId="EBI-558999">
        <id>P0A9U3</id>
        <label>ybiT</label>
    </interactant>
    <organismsDiffer>false</organismsDiffer>
    <experiments>2</experiments>
</comment>
<comment type="subcellular location">
    <subcellularLocation>
        <location evidence="5">Cell inner membrane</location>
        <topology evidence="5">Peripheral membrane protein</topology>
    </subcellularLocation>
</comment>
<comment type="disruption phenotype">
    <text evidence="3">Single mutation, decreased extracellular putrescine, in an sapBCDF operon deletion no change in resistance to antimicrobial peptide LL-37.</text>
</comment>
<comment type="similarity">
    <text evidence="5">Belongs to the ABC transporter superfamily.</text>
</comment>
<feature type="chain" id="PRO_0000092968" description="Putrescine export system ATP-binding protein SapF">
    <location>
        <begin position="1"/>
        <end position="268"/>
    </location>
</feature>
<feature type="domain" description="ABC transporter" evidence="1">
    <location>
        <begin position="6"/>
        <end position="251"/>
    </location>
</feature>
<feature type="binding site" evidence="1">
    <location>
        <begin position="47"/>
        <end position="54"/>
    </location>
    <ligand>
        <name>ATP</name>
        <dbReference type="ChEBI" id="CHEBI:30616"/>
    </ligand>
</feature>
<name>SAPF_ECOLI</name>
<keyword id="KW-0067">ATP-binding</keyword>
<keyword id="KW-0997">Cell inner membrane</keyword>
<keyword id="KW-1003">Cell membrane</keyword>
<keyword id="KW-0472">Membrane</keyword>
<keyword id="KW-0547">Nucleotide-binding</keyword>
<keyword id="KW-1185">Reference proteome</keyword>
<keyword id="KW-0813">Transport</keyword>
<proteinExistence type="evidence at protein level"/>
<dbReference type="EMBL" id="U08190">
    <property type="protein sequence ID" value="AAA17671.1"/>
    <property type="molecule type" value="Unassigned_DNA"/>
</dbReference>
<dbReference type="EMBL" id="X97282">
    <property type="protein sequence ID" value="CAA65941.1"/>
    <property type="molecule type" value="Genomic_DNA"/>
</dbReference>
<dbReference type="EMBL" id="U00096">
    <property type="protein sequence ID" value="AAC74372.1"/>
    <property type="molecule type" value="Genomic_DNA"/>
</dbReference>
<dbReference type="EMBL" id="AP009048">
    <property type="protein sequence ID" value="BAA14843.1"/>
    <property type="molecule type" value="Genomic_DNA"/>
</dbReference>
<dbReference type="PIR" id="E64877">
    <property type="entry name" value="E64877"/>
</dbReference>
<dbReference type="RefSeq" id="NP_415806.1">
    <property type="nucleotide sequence ID" value="NC_000913.3"/>
</dbReference>
<dbReference type="RefSeq" id="WP_000573407.1">
    <property type="nucleotide sequence ID" value="NZ_SSZK01000012.1"/>
</dbReference>
<dbReference type="SMR" id="P0AAH8"/>
<dbReference type="BioGRID" id="4263241">
    <property type="interactions" value="417"/>
</dbReference>
<dbReference type="BioGRID" id="849711">
    <property type="interactions" value="2"/>
</dbReference>
<dbReference type="ComplexPortal" id="CPX-4422">
    <property type="entry name" value="Putative peptide ABC transporter"/>
</dbReference>
<dbReference type="DIP" id="DIP-35903N"/>
<dbReference type="FunCoup" id="P0AAH8">
    <property type="interactions" value="254"/>
</dbReference>
<dbReference type="IntAct" id="P0AAH8">
    <property type="interactions" value="10"/>
</dbReference>
<dbReference type="STRING" id="511145.b1290"/>
<dbReference type="TCDB" id="3.A.1.5.42">
    <property type="family name" value="the atp-binding cassette (abc) superfamily"/>
</dbReference>
<dbReference type="jPOST" id="P0AAH8"/>
<dbReference type="PaxDb" id="511145-b1290"/>
<dbReference type="EnsemblBacteria" id="AAC74372">
    <property type="protein sequence ID" value="AAC74372"/>
    <property type="gene ID" value="b1290"/>
</dbReference>
<dbReference type="GeneID" id="93775415"/>
<dbReference type="GeneID" id="945335"/>
<dbReference type="KEGG" id="ecj:JW1283"/>
<dbReference type="KEGG" id="eco:b1290"/>
<dbReference type="KEGG" id="ecoc:C3026_07575"/>
<dbReference type="PATRIC" id="fig|1411691.4.peg.989"/>
<dbReference type="EchoBASE" id="EB2211"/>
<dbReference type="eggNOG" id="COG4172">
    <property type="taxonomic scope" value="Bacteria"/>
</dbReference>
<dbReference type="HOGENOM" id="CLU_000604_1_23_6"/>
<dbReference type="InParanoid" id="P0AAH8"/>
<dbReference type="OMA" id="YIYVGQH"/>
<dbReference type="OrthoDB" id="9784450at2"/>
<dbReference type="PhylomeDB" id="P0AAH8"/>
<dbReference type="BioCyc" id="EcoCyc:SAPF-MONOMER"/>
<dbReference type="BioCyc" id="MetaCyc:SAPF-MONOMER"/>
<dbReference type="BRENDA" id="7.6.2.11">
    <property type="organism ID" value="2026"/>
</dbReference>
<dbReference type="PRO" id="PR:P0AAH8"/>
<dbReference type="Proteomes" id="UP000000625">
    <property type="component" value="Chromosome"/>
</dbReference>
<dbReference type="GO" id="GO:0055052">
    <property type="term" value="C:ATP-binding cassette (ABC) transporter complex, substrate-binding subunit-containing"/>
    <property type="evidence" value="ECO:0000303"/>
    <property type="project" value="ComplexPortal"/>
</dbReference>
<dbReference type="GO" id="GO:0016020">
    <property type="term" value="C:membrane"/>
    <property type="evidence" value="ECO:0000303"/>
    <property type="project" value="ComplexPortal"/>
</dbReference>
<dbReference type="GO" id="GO:0005524">
    <property type="term" value="F:ATP binding"/>
    <property type="evidence" value="ECO:0000255"/>
    <property type="project" value="EcoCyc"/>
</dbReference>
<dbReference type="GO" id="GO:0016887">
    <property type="term" value="F:ATP hydrolysis activity"/>
    <property type="evidence" value="ECO:0007669"/>
    <property type="project" value="InterPro"/>
</dbReference>
<dbReference type="GO" id="GO:0015489">
    <property type="term" value="F:putrescine transmembrane transporter activity"/>
    <property type="evidence" value="ECO:0000315"/>
    <property type="project" value="EcoCyc"/>
</dbReference>
<dbReference type="GO" id="GO:0015833">
    <property type="term" value="P:peptide transport"/>
    <property type="evidence" value="ECO:0000303"/>
    <property type="project" value="ComplexPortal"/>
</dbReference>
<dbReference type="GO" id="GO:0015847">
    <property type="term" value="P:putrescine transport"/>
    <property type="evidence" value="ECO:0000315"/>
    <property type="project" value="EcoCyc"/>
</dbReference>
<dbReference type="CDD" id="cd03257">
    <property type="entry name" value="ABC_NikE_OppD_transporters"/>
    <property type="match status" value="1"/>
</dbReference>
<dbReference type="FunFam" id="3.40.50.300:FF:000301">
    <property type="entry name" value="Peptide transport system ATP-binding protein sapF"/>
    <property type="match status" value="1"/>
</dbReference>
<dbReference type="Gene3D" id="3.40.50.300">
    <property type="entry name" value="P-loop containing nucleotide triphosphate hydrolases"/>
    <property type="match status" value="1"/>
</dbReference>
<dbReference type="InterPro" id="IPR003593">
    <property type="entry name" value="AAA+_ATPase"/>
</dbReference>
<dbReference type="InterPro" id="IPR050319">
    <property type="entry name" value="ABC_transp_ATP-bind"/>
</dbReference>
<dbReference type="InterPro" id="IPR003439">
    <property type="entry name" value="ABC_transporter-like_ATP-bd"/>
</dbReference>
<dbReference type="InterPro" id="IPR017871">
    <property type="entry name" value="ABC_transporter-like_CS"/>
</dbReference>
<dbReference type="InterPro" id="IPR027417">
    <property type="entry name" value="P-loop_NTPase"/>
</dbReference>
<dbReference type="NCBIfam" id="NF011692">
    <property type="entry name" value="PRK15112.1"/>
    <property type="match status" value="1"/>
</dbReference>
<dbReference type="PANTHER" id="PTHR43776:SF4">
    <property type="entry name" value="PUTRESCINE EXPORT SYSTEM ATP-BINDING PROTEIN SAPF"/>
    <property type="match status" value="1"/>
</dbReference>
<dbReference type="PANTHER" id="PTHR43776">
    <property type="entry name" value="TRANSPORT ATP-BINDING PROTEIN"/>
    <property type="match status" value="1"/>
</dbReference>
<dbReference type="Pfam" id="PF00005">
    <property type="entry name" value="ABC_tran"/>
    <property type="match status" value="1"/>
</dbReference>
<dbReference type="SMART" id="SM00382">
    <property type="entry name" value="AAA"/>
    <property type="match status" value="1"/>
</dbReference>
<dbReference type="SUPFAM" id="SSF52540">
    <property type="entry name" value="P-loop containing nucleoside triphosphate hydrolases"/>
    <property type="match status" value="1"/>
</dbReference>
<dbReference type="PROSITE" id="PS00211">
    <property type="entry name" value="ABC_TRANSPORTER_1"/>
    <property type="match status" value="1"/>
</dbReference>
<dbReference type="PROSITE" id="PS50893">
    <property type="entry name" value="ABC_TRANSPORTER_2"/>
    <property type="match status" value="1"/>
</dbReference>
<protein>
    <recommendedName>
        <fullName evidence="4">Putrescine export system ATP-binding protein SapF</fullName>
    </recommendedName>
</protein>
<accession>P0AAH8</accession>
<accession>P36637</accession>
<organism>
    <name type="scientific">Escherichia coli (strain K12)</name>
    <dbReference type="NCBI Taxonomy" id="83333"/>
    <lineage>
        <taxon>Bacteria</taxon>
        <taxon>Pseudomonadati</taxon>
        <taxon>Pseudomonadota</taxon>
        <taxon>Gammaproteobacteria</taxon>
        <taxon>Enterobacterales</taxon>
        <taxon>Enterobacteriaceae</taxon>
        <taxon>Escherichia</taxon>
    </lineage>
</organism>
<sequence length="268" mass="30571">MIETLLEVRNLSKTFRYRTGWFRRQTVEAVKPLSFTLREGQTLAIIGENGSGKSTLAKMLAGMIEPTSGELLIDDHPLHFGDYSFRSQRIRMIFQDPSTSLNPRQRISQILDFPLRLNTDLEPEQRRKQIIETMRMVGLLPDHVSYYPHMLAPGQKQRLGLARALILRPKVIIADEALASLDMSMRSQLINLMLELQEKQGISYIYVTQHIGMMKHISDQVLVMHQGEVVERGSTADVLASPLHELTKRLIAGHFGEALTADAWRKDR</sequence>
<reference key="1">
    <citation type="submission" date="1994-03" db="EMBL/GenBank/DDBJ databases">
        <authorList>
            <person name="Bergler H."/>
            <person name="Ebeling A."/>
            <person name="Fuchsbichler S."/>
            <person name="Hogenauer G."/>
            <person name="Turnowsky F."/>
        </authorList>
    </citation>
    <scope>NUCLEOTIDE SEQUENCE [GENOMIC DNA]</scope>
</reference>
<reference key="2">
    <citation type="journal article" date="2001" name="Microbiology">
        <title>Identification of the ABC protein SapD as the subunit that confers ATP dependence to the K+-uptake systems Trk(H) and Trk(G) from Escherichia coli K-12.</title>
        <authorList>
            <person name="Harms C."/>
            <person name="Domoto Y."/>
            <person name="Celik C."/>
            <person name="Rahe E."/>
            <person name="Stumpe S."/>
            <person name="Schmid R."/>
            <person name="Nakamura T."/>
            <person name="Bakker E.P."/>
        </authorList>
    </citation>
    <scope>NUCLEOTIDE SEQUENCE [GENOMIC DNA]</scope>
    <scope>FUNCTION</scope>
    <source>
        <strain>K12 / FRAG5</strain>
    </source>
</reference>
<reference key="3">
    <citation type="journal article" date="1996" name="DNA Res.">
        <title>A 570-kb DNA sequence of the Escherichia coli K-12 genome corresponding to the 28.0-40.1 min region on the linkage map.</title>
        <authorList>
            <person name="Aiba H."/>
            <person name="Baba T."/>
            <person name="Fujita K."/>
            <person name="Hayashi K."/>
            <person name="Inada T."/>
            <person name="Isono K."/>
            <person name="Itoh T."/>
            <person name="Kasai H."/>
            <person name="Kashimoto K."/>
            <person name="Kimura S."/>
            <person name="Kitakawa M."/>
            <person name="Kitagawa M."/>
            <person name="Makino K."/>
            <person name="Miki T."/>
            <person name="Mizobuchi K."/>
            <person name="Mori H."/>
            <person name="Mori T."/>
            <person name="Motomura K."/>
            <person name="Nakade S."/>
            <person name="Nakamura Y."/>
            <person name="Nashimoto H."/>
            <person name="Nishio Y."/>
            <person name="Oshima T."/>
            <person name="Saito N."/>
            <person name="Sampei G."/>
            <person name="Seki Y."/>
            <person name="Sivasundaram S."/>
            <person name="Tagami H."/>
            <person name="Takeda J."/>
            <person name="Takemoto K."/>
            <person name="Takeuchi Y."/>
            <person name="Wada C."/>
            <person name="Yamamoto Y."/>
            <person name="Horiuchi T."/>
        </authorList>
    </citation>
    <scope>NUCLEOTIDE SEQUENCE [LARGE SCALE GENOMIC DNA]</scope>
    <source>
        <strain>K12 / W3110 / ATCC 27325 / DSM 5911</strain>
    </source>
</reference>
<reference key="4">
    <citation type="journal article" date="1997" name="Science">
        <title>The complete genome sequence of Escherichia coli K-12.</title>
        <authorList>
            <person name="Blattner F.R."/>
            <person name="Plunkett G. III"/>
            <person name="Bloch C.A."/>
            <person name="Perna N.T."/>
            <person name="Burland V."/>
            <person name="Riley M."/>
            <person name="Collado-Vides J."/>
            <person name="Glasner J.D."/>
            <person name="Rode C.K."/>
            <person name="Mayhew G.F."/>
            <person name="Gregor J."/>
            <person name="Davis N.W."/>
            <person name="Kirkpatrick H.A."/>
            <person name="Goeden M.A."/>
            <person name="Rose D.J."/>
            <person name="Mau B."/>
            <person name="Shao Y."/>
        </authorList>
    </citation>
    <scope>NUCLEOTIDE SEQUENCE [LARGE SCALE GENOMIC DNA]</scope>
    <source>
        <strain>K12 / MG1655 / ATCC 47076</strain>
    </source>
</reference>
<reference key="5">
    <citation type="journal article" date="2006" name="Mol. Syst. Biol.">
        <title>Highly accurate genome sequences of Escherichia coli K-12 strains MG1655 and W3110.</title>
        <authorList>
            <person name="Hayashi K."/>
            <person name="Morooka N."/>
            <person name="Yamamoto Y."/>
            <person name="Fujita K."/>
            <person name="Isono K."/>
            <person name="Choi S."/>
            <person name="Ohtsubo E."/>
            <person name="Baba T."/>
            <person name="Wanner B.L."/>
            <person name="Mori H."/>
            <person name="Horiuchi T."/>
        </authorList>
    </citation>
    <scope>NUCLEOTIDE SEQUENCE [LARGE SCALE GENOMIC DNA]</scope>
    <source>
        <strain>K12 / W3110 / ATCC 27325 / DSM 5911</strain>
    </source>
</reference>
<reference key="6">
    <citation type="journal article" date="2016" name="J. Biol. Chem.">
        <title>A novel putrescine exporter SapBCDF of Escherichia coli.</title>
        <authorList>
            <person name="Sugiyama Y."/>
            <person name="Nakamura A."/>
            <person name="Matsumoto M."/>
            <person name="Kanbe A."/>
            <person name="Sakanaka M."/>
            <person name="Higashi K."/>
            <person name="Igarashi K."/>
            <person name="Katayama T."/>
            <person name="Suzuki H."/>
            <person name="Kurihara S."/>
        </authorList>
    </citation>
    <scope>FUNCTION IN PUTRESCINE EXPORT</scope>
    <scope>DISRUPTION PHENOTYPE</scope>
    <source>
        <strain>K12 / BW25113</strain>
        <strain>K12 / MG1655 / ATCC 47076</strain>
    </source>
</reference>
<evidence type="ECO:0000255" key="1">
    <source>
        <dbReference type="PROSITE-ProRule" id="PRU00434"/>
    </source>
</evidence>
<evidence type="ECO:0000269" key="2">
    <source>
    </source>
</evidence>
<evidence type="ECO:0000269" key="3">
    <source>
    </source>
</evidence>
<evidence type="ECO:0000303" key="4">
    <source>
    </source>
</evidence>
<evidence type="ECO:0000305" key="5"/>
<gene>
    <name type="primary">sapF</name>
    <name type="ordered locus">b1290</name>
    <name type="ordered locus">JW1283</name>
</gene>